<reference key="1">
    <citation type="journal article" date="2004" name="Mol. Biol. Evol.">
        <title>Rhesus macaque class I duplicon structures, organization, and evolution within the alpha block of the major histocompatibility complex.</title>
        <authorList>
            <person name="Kulski J.K."/>
            <person name="Anzai T."/>
            <person name="Shiina T."/>
            <person name="Inoko H."/>
        </authorList>
    </citation>
    <scope>NUCLEOTIDE SEQUENCE [GENOMIC DNA]</scope>
</reference>
<comment type="function">
    <text evidence="1">E3 ubiquitin ligase that plays a role in several processes including innate antiviral immnity, cell migration and chemotaxis. Acts as a 'Lys-63'-specific ubiquitin ligase for MAPK1/ERK2 and MAPK3/ERK1, promoting their activation by facilitating their interaction with MAP2K1 and MAP2K2. Also plays a role in cell migration and chemotaxis by acting as a stable focal adhesion component upon recruitment by multi-adapter protein paxillin/PXN. Functions in the RIGI-mediated interferon induction pathway upstream or at the level of MAVS. Inhibits NF-kappa-B activation by turnover of 'Lys-63'-linked ubiquitination of MAP3K7/TAK1. Mechanistically, prevents TRIM8 cytoplasmic translocation and thus inhibits TRIM8-mediated 'Lys-63'-linked polyubiquitination of MAP3K7/TAK1 in the cytoplasm. Also has an important regulatory effect on the activation of hepatic stellate cells (HSCs).</text>
</comment>
<comment type="catalytic activity">
    <reaction evidence="1">
        <text>S-ubiquitinyl-[E2 ubiquitin-conjugating enzyme]-L-cysteine + [acceptor protein]-L-lysine = [E2 ubiquitin-conjugating enzyme]-L-cysteine + N(6)-ubiquitinyl-[acceptor protein]-L-lysine.</text>
        <dbReference type="EC" id="2.3.2.27"/>
    </reaction>
</comment>
<comment type="subunit">
    <text evidence="1">Interacts with paxillin/PXN; this interaction recruits TRIM15 to focal adhesions. Interacts with TRIM8; this interaction prevents TRIM8 cytoplasmic translocation.</text>
</comment>
<comment type="subcellular location">
    <subcellularLocation>
        <location evidence="1">Cytoplasm</location>
    </subcellularLocation>
    <subcellularLocation>
        <location evidence="1">Nucleus</location>
    </subcellularLocation>
    <subcellularLocation>
        <location evidence="1">Cell junction</location>
        <location evidence="1">Focal adhesion</location>
    </subcellularLocation>
    <text evidence="1">Localizes to focal adhesions during the early stage of adhesion biogenesis.</text>
</comment>
<comment type="similarity">
    <text evidence="6">Belongs to the TRIM/RBCC family.</text>
</comment>
<proteinExistence type="inferred from homology"/>
<gene>
    <name type="primary">TRIM15</name>
</gene>
<feature type="chain" id="PRO_0000056219" description="E3 ubiquitin-protein ligase TRIM15">
    <location>
        <begin position="1"/>
        <end position="465"/>
    </location>
</feature>
<feature type="domain" description="B30.2/SPRY" evidence="5">
    <location>
        <begin position="276"/>
        <end position="465"/>
    </location>
</feature>
<feature type="zinc finger region" description="RING-type" evidence="4">
    <location>
        <begin position="16"/>
        <end position="61"/>
    </location>
</feature>
<feature type="zinc finger region" description="B box-type" evidence="3">
    <location>
        <begin position="78"/>
        <end position="119"/>
    </location>
</feature>
<feature type="coiled-coil region" evidence="2">
    <location>
        <begin position="126"/>
        <end position="229"/>
    </location>
</feature>
<feature type="binding site" evidence="3">
    <location>
        <position position="83"/>
    </location>
    <ligand>
        <name>Zn(2+)</name>
        <dbReference type="ChEBI" id="CHEBI:29105"/>
    </ligand>
</feature>
<feature type="binding site" evidence="3">
    <location>
        <position position="86"/>
    </location>
    <ligand>
        <name>Zn(2+)</name>
        <dbReference type="ChEBI" id="CHEBI:29105"/>
    </ligand>
</feature>
<feature type="binding site" evidence="3">
    <location>
        <position position="105"/>
    </location>
    <ligand>
        <name>Zn(2+)</name>
        <dbReference type="ChEBI" id="CHEBI:29105"/>
    </ligand>
</feature>
<feature type="binding site" evidence="3">
    <location>
        <position position="111"/>
    </location>
    <ligand>
        <name>Zn(2+)</name>
        <dbReference type="ChEBI" id="CHEBI:29105"/>
    </ligand>
</feature>
<sequence>MPSTPSLKVVHELPACTLCVGPLEDAVTAPCGHTFCRLCLPTLSQMGAQSSGKILLCPLCQEEEQAETPMAPVPLGPLGETYCEEHGEKIYFFCENDAEFLCVFCREGPTHQAHTVGFLDEAIQPYRDRLRSRLEALSMERDEIEDVKCREDQKLQVLLTQIENKKHQVEAAFERLQQELEQQRCLLLARLRELEQQIWKERDEYITKVSEEVSRLGAQVKELEEKCQQPASELLQDIRVNQSRCEMKTFVSPEAISPDLVKKIRDFHRKILTLPEMMRMFSENLAHHLEIDSGVITLDPQTASRSLVLSEDRKSVRYTRQKKNLPDSPLRFDGLPAVLGFPGFSSGRHRWQVDLQLGDGGGCTVGVAGEGVRRKGEMGLSAEDGVWAVIISHQQCWASTSPGTDLPLSEIPRYVGVALDYEAGQVTLFNAQTQEPIFTFAASFSGKVFPFFAVWKKGSCLTLKG</sequence>
<keyword id="KW-0965">Cell junction</keyword>
<keyword id="KW-0175">Coiled coil</keyword>
<keyword id="KW-0963">Cytoplasm</keyword>
<keyword id="KW-0479">Metal-binding</keyword>
<keyword id="KW-0539">Nucleus</keyword>
<keyword id="KW-1185">Reference proteome</keyword>
<keyword id="KW-0808">Transferase</keyword>
<keyword id="KW-0833">Ubl conjugation pathway</keyword>
<keyword id="KW-0862">Zinc</keyword>
<keyword id="KW-0863">Zinc-finger</keyword>
<protein>
    <recommendedName>
        <fullName>E3 ubiquitin-protein ligase TRIM15</fullName>
        <ecNumber evidence="1">2.3.2.27</ecNumber>
    </recommendedName>
</protein>
<name>TRI15_MACMU</name>
<dbReference type="EC" id="2.3.2.27" evidence="1"/>
<dbReference type="EMBL" id="AB128049">
    <property type="protein sequence ID" value="BAD69771.1"/>
    <property type="molecule type" value="Genomic_DNA"/>
</dbReference>
<dbReference type="RefSeq" id="NP_001108420.1">
    <property type="nucleotide sequence ID" value="NM_001114948.1"/>
</dbReference>
<dbReference type="SMR" id="Q5TM55"/>
<dbReference type="FunCoup" id="Q5TM55">
    <property type="interactions" value="224"/>
</dbReference>
<dbReference type="STRING" id="9544.ENSMMUP00000003861"/>
<dbReference type="PaxDb" id="9544-ENSMMUP00000003861"/>
<dbReference type="Ensembl" id="ENSMMUT00000004092.3">
    <property type="protein sequence ID" value="ENSMMUP00000003861.2"/>
    <property type="gene ID" value="ENSMMUG00000002890.4"/>
</dbReference>
<dbReference type="GeneID" id="712497"/>
<dbReference type="KEGG" id="mcc:712497"/>
<dbReference type="CTD" id="89870"/>
<dbReference type="VEuPathDB" id="HostDB:ENSMMUG00000002890"/>
<dbReference type="VGNC" id="VGNC:83958">
    <property type="gene designation" value="TRIM15"/>
</dbReference>
<dbReference type="eggNOG" id="KOG2177">
    <property type="taxonomic scope" value="Eukaryota"/>
</dbReference>
<dbReference type="GeneTree" id="ENSGT00940000162589"/>
<dbReference type="InParanoid" id="Q5TM55"/>
<dbReference type="OMA" id="EDTKCRE"/>
<dbReference type="OrthoDB" id="6105938at2759"/>
<dbReference type="Proteomes" id="UP000006718">
    <property type="component" value="Chromosome 4"/>
</dbReference>
<dbReference type="Bgee" id="ENSMMUG00000002890">
    <property type="expression patterns" value="Expressed in colon and 1 other cell type or tissue"/>
</dbReference>
<dbReference type="GO" id="GO:0005737">
    <property type="term" value="C:cytoplasm"/>
    <property type="evidence" value="ECO:0000318"/>
    <property type="project" value="GO_Central"/>
</dbReference>
<dbReference type="GO" id="GO:0005925">
    <property type="term" value="C:focal adhesion"/>
    <property type="evidence" value="ECO:0007669"/>
    <property type="project" value="UniProtKB-SubCell"/>
</dbReference>
<dbReference type="GO" id="GO:0005634">
    <property type="term" value="C:nucleus"/>
    <property type="evidence" value="ECO:0007669"/>
    <property type="project" value="UniProtKB-SubCell"/>
</dbReference>
<dbReference type="GO" id="GO:0140313">
    <property type="term" value="F:molecular sequestering activity"/>
    <property type="evidence" value="ECO:0007669"/>
    <property type="project" value="Ensembl"/>
</dbReference>
<dbReference type="GO" id="GO:0003713">
    <property type="term" value="F:transcription coactivator activity"/>
    <property type="evidence" value="ECO:0007669"/>
    <property type="project" value="Ensembl"/>
</dbReference>
<dbReference type="GO" id="GO:0061630">
    <property type="term" value="F:ubiquitin protein ligase activity"/>
    <property type="evidence" value="ECO:0000318"/>
    <property type="project" value="GO_Central"/>
</dbReference>
<dbReference type="GO" id="GO:0008270">
    <property type="term" value="F:zinc ion binding"/>
    <property type="evidence" value="ECO:0007669"/>
    <property type="project" value="UniProtKB-KW"/>
</dbReference>
<dbReference type="GO" id="GO:0045087">
    <property type="term" value="P:innate immune response"/>
    <property type="evidence" value="ECO:0000318"/>
    <property type="project" value="GO_Central"/>
</dbReference>
<dbReference type="GO" id="GO:1901253">
    <property type="term" value="P:negative regulation of intracellular transport of viral material"/>
    <property type="evidence" value="ECO:0007669"/>
    <property type="project" value="Ensembl"/>
</dbReference>
<dbReference type="GO" id="GO:1901223">
    <property type="term" value="P:negative regulation of non-canonical NF-kappaB signal transduction"/>
    <property type="evidence" value="ECO:0007669"/>
    <property type="project" value="Ensembl"/>
</dbReference>
<dbReference type="GO" id="GO:1900246">
    <property type="term" value="P:positive regulation of RIG-I signaling pathway"/>
    <property type="evidence" value="ECO:0007669"/>
    <property type="project" value="Ensembl"/>
</dbReference>
<dbReference type="GO" id="GO:0032481">
    <property type="term" value="P:positive regulation of type I interferon production"/>
    <property type="evidence" value="ECO:0007669"/>
    <property type="project" value="Ensembl"/>
</dbReference>
<dbReference type="GO" id="GO:0044790">
    <property type="term" value="P:suppression of viral release by host"/>
    <property type="evidence" value="ECO:0007669"/>
    <property type="project" value="Ensembl"/>
</dbReference>
<dbReference type="CDD" id="cd19765">
    <property type="entry name" value="Bbox2_TRIM10-like"/>
    <property type="match status" value="1"/>
</dbReference>
<dbReference type="CDD" id="cd15826">
    <property type="entry name" value="SPRY_PRY_TRIM15"/>
    <property type="match status" value="1"/>
</dbReference>
<dbReference type="FunFam" id="3.30.160.60:FF:002334">
    <property type="entry name" value="Tripartite motif containing 15"/>
    <property type="match status" value="1"/>
</dbReference>
<dbReference type="FunFam" id="3.30.40.10:FF:000698">
    <property type="entry name" value="Tripartite motif containing 15"/>
    <property type="match status" value="1"/>
</dbReference>
<dbReference type="FunFam" id="2.60.120.920:FF:000044">
    <property type="entry name" value="Tripartite motif-containing protein 10"/>
    <property type="match status" value="1"/>
</dbReference>
<dbReference type="Gene3D" id="2.60.120.920">
    <property type="match status" value="1"/>
</dbReference>
<dbReference type="Gene3D" id="3.30.160.60">
    <property type="entry name" value="Classic Zinc Finger"/>
    <property type="match status" value="1"/>
</dbReference>
<dbReference type="Gene3D" id="3.30.40.10">
    <property type="entry name" value="Zinc/RING finger domain, C3HC4 (zinc finger)"/>
    <property type="match status" value="1"/>
</dbReference>
<dbReference type="InterPro" id="IPR001870">
    <property type="entry name" value="B30.2/SPRY"/>
</dbReference>
<dbReference type="InterPro" id="IPR043136">
    <property type="entry name" value="B30.2/SPRY_sf"/>
</dbReference>
<dbReference type="InterPro" id="IPR003879">
    <property type="entry name" value="Butyrophylin_SPRY"/>
</dbReference>
<dbReference type="InterPro" id="IPR013320">
    <property type="entry name" value="ConA-like_dom_sf"/>
</dbReference>
<dbReference type="InterPro" id="IPR006574">
    <property type="entry name" value="PRY"/>
</dbReference>
<dbReference type="InterPro" id="IPR003877">
    <property type="entry name" value="SPRY_dom"/>
</dbReference>
<dbReference type="InterPro" id="IPR050143">
    <property type="entry name" value="TRIM/RBCC"/>
</dbReference>
<dbReference type="InterPro" id="IPR000315">
    <property type="entry name" value="Znf_B-box"/>
</dbReference>
<dbReference type="InterPro" id="IPR018957">
    <property type="entry name" value="Znf_C3HC4_RING-type"/>
</dbReference>
<dbReference type="InterPro" id="IPR001841">
    <property type="entry name" value="Znf_RING"/>
</dbReference>
<dbReference type="InterPro" id="IPR013083">
    <property type="entry name" value="Znf_RING/FYVE/PHD"/>
</dbReference>
<dbReference type="InterPro" id="IPR017907">
    <property type="entry name" value="Znf_RING_CS"/>
</dbReference>
<dbReference type="PANTHER" id="PTHR24103">
    <property type="entry name" value="E3 UBIQUITIN-PROTEIN LIGASE TRIM"/>
    <property type="match status" value="1"/>
</dbReference>
<dbReference type="Pfam" id="PF13765">
    <property type="entry name" value="PRY"/>
    <property type="match status" value="1"/>
</dbReference>
<dbReference type="Pfam" id="PF00622">
    <property type="entry name" value="SPRY"/>
    <property type="match status" value="1"/>
</dbReference>
<dbReference type="Pfam" id="PF00643">
    <property type="entry name" value="zf-B_box"/>
    <property type="match status" value="1"/>
</dbReference>
<dbReference type="Pfam" id="PF00097">
    <property type="entry name" value="zf-C3HC4"/>
    <property type="match status" value="1"/>
</dbReference>
<dbReference type="PRINTS" id="PR01407">
    <property type="entry name" value="BUTYPHLNCDUF"/>
</dbReference>
<dbReference type="SMART" id="SM00336">
    <property type="entry name" value="BBOX"/>
    <property type="match status" value="1"/>
</dbReference>
<dbReference type="SMART" id="SM00589">
    <property type="entry name" value="PRY"/>
    <property type="match status" value="1"/>
</dbReference>
<dbReference type="SMART" id="SM00184">
    <property type="entry name" value="RING"/>
    <property type="match status" value="1"/>
</dbReference>
<dbReference type="SMART" id="SM00449">
    <property type="entry name" value="SPRY"/>
    <property type="match status" value="1"/>
</dbReference>
<dbReference type="SUPFAM" id="SSF57845">
    <property type="entry name" value="B-box zinc-binding domain"/>
    <property type="match status" value="1"/>
</dbReference>
<dbReference type="SUPFAM" id="SSF49899">
    <property type="entry name" value="Concanavalin A-like lectins/glucanases"/>
    <property type="match status" value="1"/>
</dbReference>
<dbReference type="SUPFAM" id="SSF57850">
    <property type="entry name" value="RING/U-box"/>
    <property type="match status" value="1"/>
</dbReference>
<dbReference type="PROSITE" id="PS50188">
    <property type="entry name" value="B302_SPRY"/>
    <property type="match status" value="1"/>
</dbReference>
<dbReference type="PROSITE" id="PS50119">
    <property type="entry name" value="ZF_BBOX"/>
    <property type="match status" value="1"/>
</dbReference>
<dbReference type="PROSITE" id="PS00518">
    <property type="entry name" value="ZF_RING_1"/>
    <property type="match status" value="1"/>
</dbReference>
<dbReference type="PROSITE" id="PS50089">
    <property type="entry name" value="ZF_RING_2"/>
    <property type="match status" value="1"/>
</dbReference>
<accession>Q5TM55</accession>
<evidence type="ECO:0000250" key="1">
    <source>
        <dbReference type="UniProtKB" id="Q9C019"/>
    </source>
</evidence>
<evidence type="ECO:0000255" key="2"/>
<evidence type="ECO:0000255" key="3">
    <source>
        <dbReference type="PROSITE-ProRule" id="PRU00024"/>
    </source>
</evidence>
<evidence type="ECO:0000255" key="4">
    <source>
        <dbReference type="PROSITE-ProRule" id="PRU00175"/>
    </source>
</evidence>
<evidence type="ECO:0000255" key="5">
    <source>
        <dbReference type="PROSITE-ProRule" id="PRU00548"/>
    </source>
</evidence>
<evidence type="ECO:0000305" key="6"/>
<organism>
    <name type="scientific">Macaca mulatta</name>
    <name type="common">Rhesus macaque</name>
    <dbReference type="NCBI Taxonomy" id="9544"/>
    <lineage>
        <taxon>Eukaryota</taxon>
        <taxon>Metazoa</taxon>
        <taxon>Chordata</taxon>
        <taxon>Craniata</taxon>
        <taxon>Vertebrata</taxon>
        <taxon>Euteleostomi</taxon>
        <taxon>Mammalia</taxon>
        <taxon>Eutheria</taxon>
        <taxon>Euarchontoglires</taxon>
        <taxon>Primates</taxon>
        <taxon>Haplorrhini</taxon>
        <taxon>Catarrhini</taxon>
        <taxon>Cercopithecidae</taxon>
        <taxon>Cercopithecinae</taxon>
        <taxon>Macaca</taxon>
    </lineage>
</organism>